<reference key="1">
    <citation type="journal article" date="2007" name="Genome Res.">
        <title>Genome characteristics of facultatively symbiotic Frankia sp. strains reflect host range and host plant biogeography.</title>
        <authorList>
            <person name="Normand P."/>
            <person name="Lapierre P."/>
            <person name="Tisa L.S."/>
            <person name="Gogarten J.P."/>
            <person name="Alloisio N."/>
            <person name="Bagnarol E."/>
            <person name="Bassi C.A."/>
            <person name="Berry A.M."/>
            <person name="Bickhart D.M."/>
            <person name="Choisne N."/>
            <person name="Couloux A."/>
            <person name="Cournoyer B."/>
            <person name="Cruveiller S."/>
            <person name="Daubin V."/>
            <person name="Demange N."/>
            <person name="Francino M.P."/>
            <person name="Goltsman E."/>
            <person name="Huang Y."/>
            <person name="Kopp O.R."/>
            <person name="Labarre L."/>
            <person name="Lapidus A."/>
            <person name="Lavire C."/>
            <person name="Marechal J."/>
            <person name="Martinez M."/>
            <person name="Mastronunzio J.E."/>
            <person name="Mullin B.C."/>
            <person name="Niemann J."/>
            <person name="Pujic P."/>
            <person name="Rawnsley T."/>
            <person name="Rouy Z."/>
            <person name="Schenowitz C."/>
            <person name="Sellstedt A."/>
            <person name="Tavares F."/>
            <person name="Tomkins J.P."/>
            <person name="Vallenet D."/>
            <person name="Valverde C."/>
            <person name="Wall L.G."/>
            <person name="Wang Y."/>
            <person name="Medigue C."/>
            <person name="Benson D.R."/>
        </authorList>
    </citation>
    <scope>NUCLEOTIDE SEQUENCE [LARGE SCALE GENOMIC DNA]</scope>
    <source>
        <strain>EAN1pec</strain>
    </source>
</reference>
<gene>
    <name evidence="1" type="primary">rpsS</name>
    <name type="ordered locus">Franean1_6045</name>
</gene>
<organism>
    <name type="scientific">Parafrankia sp. (strain EAN1pec)</name>
    <dbReference type="NCBI Taxonomy" id="298653"/>
    <lineage>
        <taxon>Bacteria</taxon>
        <taxon>Bacillati</taxon>
        <taxon>Actinomycetota</taxon>
        <taxon>Actinomycetes</taxon>
        <taxon>Frankiales</taxon>
        <taxon>Frankiaceae</taxon>
        <taxon>Parafrankia</taxon>
    </lineage>
</organism>
<protein>
    <recommendedName>
        <fullName evidence="1">Small ribosomal subunit protein uS19</fullName>
    </recommendedName>
    <alternativeName>
        <fullName evidence="2">30S ribosomal protein S19</fullName>
    </alternativeName>
</protein>
<feature type="chain" id="PRO_1000127981" description="Small ribosomal subunit protein uS19">
    <location>
        <begin position="1"/>
        <end position="93"/>
    </location>
</feature>
<dbReference type="EMBL" id="CP000820">
    <property type="protein sequence ID" value="ABW15389.1"/>
    <property type="molecule type" value="Genomic_DNA"/>
</dbReference>
<dbReference type="RefSeq" id="WP_018505128.1">
    <property type="nucleotide sequence ID" value="NC_009921.1"/>
</dbReference>
<dbReference type="SMR" id="A8LC52"/>
<dbReference type="STRING" id="298653.Franean1_6045"/>
<dbReference type="KEGG" id="fre:Franean1_6045"/>
<dbReference type="eggNOG" id="COG0185">
    <property type="taxonomic scope" value="Bacteria"/>
</dbReference>
<dbReference type="HOGENOM" id="CLU_144911_0_1_11"/>
<dbReference type="GO" id="GO:0005737">
    <property type="term" value="C:cytoplasm"/>
    <property type="evidence" value="ECO:0007669"/>
    <property type="project" value="UniProtKB-ARBA"/>
</dbReference>
<dbReference type="GO" id="GO:0015935">
    <property type="term" value="C:small ribosomal subunit"/>
    <property type="evidence" value="ECO:0007669"/>
    <property type="project" value="InterPro"/>
</dbReference>
<dbReference type="GO" id="GO:0019843">
    <property type="term" value="F:rRNA binding"/>
    <property type="evidence" value="ECO:0007669"/>
    <property type="project" value="UniProtKB-UniRule"/>
</dbReference>
<dbReference type="GO" id="GO:0003735">
    <property type="term" value="F:structural constituent of ribosome"/>
    <property type="evidence" value="ECO:0007669"/>
    <property type="project" value="InterPro"/>
</dbReference>
<dbReference type="GO" id="GO:0000028">
    <property type="term" value="P:ribosomal small subunit assembly"/>
    <property type="evidence" value="ECO:0007669"/>
    <property type="project" value="TreeGrafter"/>
</dbReference>
<dbReference type="GO" id="GO:0006412">
    <property type="term" value="P:translation"/>
    <property type="evidence" value="ECO:0007669"/>
    <property type="project" value="UniProtKB-UniRule"/>
</dbReference>
<dbReference type="FunFam" id="3.30.860.10:FF:000001">
    <property type="entry name" value="30S ribosomal protein S19"/>
    <property type="match status" value="1"/>
</dbReference>
<dbReference type="Gene3D" id="3.30.860.10">
    <property type="entry name" value="30s Ribosomal Protein S19, Chain A"/>
    <property type="match status" value="1"/>
</dbReference>
<dbReference type="HAMAP" id="MF_00531">
    <property type="entry name" value="Ribosomal_uS19"/>
    <property type="match status" value="1"/>
</dbReference>
<dbReference type="InterPro" id="IPR002222">
    <property type="entry name" value="Ribosomal_uS19"/>
</dbReference>
<dbReference type="InterPro" id="IPR005732">
    <property type="entry name" value="Ribosomal_uS19_bac-type"/>
</dbReference>
<dbReference type="InterPro" id="IPR020934">
    <property type="entry name" value="Ribosomal_uS19_CS"/>
</dbReference>
<dbReference type="InterPro" id="IPR023575">
    <property type="entry name" value="Ribosomal_uS19_SF"/>
</dbReference>
<dbReference type="NCBIfam" id="TIGR01050">
    <property type="entry name" value="rpsS_bact"/>
    <property type="match status" value="1"/>
</dbReference>
<dbReference type="PANTHER" id="PTHR11880">
    <property type="entry name" value="RIBOSOMAL PROTEIN S19P FAMILY MEMBER"/>
    <property type="match status" value="1"/>
</dbReference>
<dbReference type="PANTHER" id="PTHR11880:SF8">
    <property type="entry name" value="SMALL RIBOSOMAL SUBUNIT PROTEIN US19M"/>
    <property type="match status" value="1"/>
</dbReference>
<dbReference type="Pfam" id="PF00203">
    <property type="entry name" value="Ribosomal_S19"/>
    <property type="match status" value="1"/>
</dbReference>
<dbReference type="PIRSF" id="PIRSF002144">
    <property type="entry name" value="Ribosomal_S19"/>
    <property type="match status" value="1"/>
</dbReference>
<dbReference type="PRINTS" id="PR00975">
    <property type="entry name" value="RIBOSOMALS19"/>
</dbReference>
<dbReference type="SUPFAM" id="SSF54570">
    <property type="entry name" value="Ribosomal protein S19"/>
    <property type="match status" value="1"/>
</dbReference>
<dbReference type="PROSITE" id="PS00323">
    <property type="entry name" value="RIBOSOMAL_S19"/>
    <property type="match status" value="1"/>
</dbReference>
<keyword id="KW-0687">Ribonucleoprotein</keyword>
<keyword id="KW-0689">Ribosomal protein</keyword>
<keyword id="KW-0694">RNA-binding</keyword>
<keyword id="KW-0699">rRNA-binding</keyword>
<proteinExistence type="inferred from homology"/>
<comment type="function">
    <text evidence="1">Protein S19 forms a complex with S13 that binds strongly to the 16S ribosomal RNA.</text>
</comment>
<comment type="similarity">
    <text evidence="1">Belongs to the universal ribosomal protein uS19 family.</text>
</comment>
<accession>A8LC52</accession>
<sequence length="93" mass="10674">MPRSLKKGPFVDDHLLKKVDVQNEKGTKHVIRTWSRRSTVIPDMLGHTIAVHDGRKHVPVFITEGMVGHKLGEFAPTRTFRGHVKEDRRSRRG</sequence>
<evidence type="ECO:0000255" key="1">
    <source>
        <dbReference type="HAMAP-Rule" id="MF_00531"/>
    </source>
</evidence>
<evidence type="ECO:0000305" key="2"/>
<name>RS19_PARS2</name>